<organism>
    <name type="scientific">Petunia hybrida</name>
    <name type="common">Petunia</name>
    <dbReference type="NCBI Taxonomy" id="4102"/>
    <lineage>
        <taxon>Eukaryota</taxon>
        <taxon>Viridiplantae</taxon>
        <taxon>Streptophyta</taxon>
        <taxon>Embryophyta</taxon>
        <taxon>Tracheophyta</taxon>
        <taxon>Spermatophyta</taxon>
        <taxon>Magnoliopsida</taxon>
        <taxon>eudicotyledons</taxon>
        <taxon>Gunneridae</taxon>
        <taxon>Pentapetalae</taxon>
        <taxon>asterids</taxon>
        <taxon>lamiids</taxon>
        <taxon>Solanales</taxon>
        <taxon>Solanaceae</taxon>
        <taxon>Petunioideae</taxon>
        <taxon>Petunia</taxon>
    </lineage>
</organism>
<accession>Q08507</accession>
<proteinExistence type="inferred from homology"/>
<comment type="catalytic activity">
    <reaction>
        <text>1-aminocyclopropane-1-carboxylate + L-ascorbate + O2 = ethene + L-dehydroascorbate + hydrogen cyanide + CO2 + 2 H2O</text>
        <dbReference type="Rhea" id="RHEA:23640"/>
        <dbReference type="ChEBI" id="CHEBI:15377"/>
        <dbReference type="ChEBI" id="CHEBI:15379"/>
        <dbReference type="ChEBI" id="CHEBI:16526"/>
        <dbReference type="ChEBI" id="CHEBI:18153"/>
        <dbReference type="ChEBI" id="CHEBI:18407"/>
        <dbReference type="ChEBI" id="CHEBI:38290"/>
        <dbReference type="ChEBI" id="CHEBI:58360"/>
        <dbReference type="ChEBI" id="CHEBI:58539"/>
        <dbReference type="EC" id="1.14.17.4"/>
    </reaction>
</comment>
<comment type="cofactor">
    <cofactor>
        <name>Fe cation</name>
        <dbReference type="ChEBI" id="CHEBI:24875"/>
    </cofactor>
</comment>
<comment type="pathway">
    <text>Alkene biosynthesis; ethylene biosynthesis via S-adenosyl-L-methionine; ethylene from S-adenosyl-L-methionine: step 2/2.</text>
</comment>
<comment type="similarity">
    <text evidence="2">Belongs to the iron/ascorbate-dependent oxidoreductase family.</text>
</comment>
<name>ACCO3_PETHY</name>
<protein>
    <recommendedName>
        <fullName>1-aminocyclopropane-1-carboxylate oxidase 3</fullName>
        <shortName>ACC oxidase 3</shortName>
        <ecNumber>1.14.17.4</ecNumber>
    </recommendedName>
    <alternativeName>
        <fullName>Ethylene-forming enzyme</fullName>
        <shortName>EFE</shortName>
    </alternativeName>
</protein>
<evidence type="ECO:0000255" key="1">
    <source>
        <dbReference type="PROSITE-ProRule" id="PRU00805"/>
    </source>
</evidence>
<evidence type="ECO:0000305" key="2"/>
<keyword id="KW-0266">Ethylene biosynthesis</keyword>
<keyword id="KW-0408">Iron</keyword>
<keyword id="KW-0479">Metal-binding</keyword>
<keyword id="KW-0560">Oxidoreductase</keyword>
<keyword id="KW-0847">Vitamin C</keyword>
<reference key="1">
    <citation type="journal article" date="1993" name="Plant Mol. Biol.">
        <title>Organization and structure of the 1-aminocyclopropane-1-carboxylate oxidase gene family from Petunia hybrida.</title>
        <authorList>
            <person name="Tang X."/>
            <person name="Wang H."/>
            <person name="Brandt A.S."/>
            <person name="Woodson W.R."/>
        </authorList>
    </citation>
    <scope>NUCLEOTIDE SEQUENCE [GENOMIC DNA]</scope>
</reference>
<sequence length="320" mass="36274">MENFPIINLEKLNGSERDATMEMIKDACENWGFFELVNHGIPHEVMDTVEKLTKGHYKKCMEQRFKELVASKGLEAVQAEVTDLDWESTFFLRHLPVSNISEVPDLDDEYREVMRDFAKRLEKLAEELLDLLCENLGLEKGYLKKAFYGSKGPNFGTKVSNYPPCPKPDLIKGLRAHTDAGGIILLFQDDKVSGLQLLKDGQWIDVPPMRHSIVVNLGDQLEVITNGKYKSVLHRVIAQTDGTRMSLASFYNPGSDAVIYPAPTLVEKEADQECKQVYPKFVFDDYMKLYAGLKFQAKEPRFEAMKAREADVKSDPIATA</sequence>
<feature type="chain" id="PRO_0000067272" description="1-aminocyclopropane-1-carboxylate oxidase 3">
    <location>
        <begin position="1"/>
        <end position="320"/>
    </location>
</feature>
<feature type="domain" description="Fe2OG dioxygenase" evidence="1">
    <location>
        <begin position="153"/>
        <end position="253"/>
    </location>
</feature>
<feature type="binding site" evidence="1">
    <location>
        <position position="177"/>
    </location>
    <ligand>
        <name>Fe cation</name>
        <dbReference type="ChEBI" id="CHEBI:24875"/>
    </ligand>
</feature>
<feature type="binding site" evidence="1">
    <location>
        <position position="179"/>
    </location>
    <ligand>
        <name>Fe cation</name>
        <dbReference type="ChEBI" id="CHEBI:24875"/>
    </ligand>
</feature>
<feature type="binding site" evidence="1">
    <location>
        <position position="234"/>
    </location>
    <ligand>
        <name>Fe cation</name>
        <dbReference type="ChEBI" id="CHEBI:24875"/>
    </ligand>
</feature>
<dbReference type="EC" id="1.14.17.4"/>
<dbReference type="EMBL" id="L21978">
    <property type="protein sequence ID" value="AAA33697.1"/>
    <property type="molecule type" value="Genomic_DNA"/>
</dbReference>
<dbReference type="PIR" id="S42561">
    <property type="entry name" value="S42561"/>
</dbReference>
<dbReference type="SMR" id="Q08507"/>
<dbReference type="UniPathway" id="UPA00384">
    <property type="reaction ID" value="UER00563"/>
</dbReference>
<dbReference type="GO" id="GO:0009815">
    <property type="term" value="F:1-aminocyclopropane-1-carboxylate oxidase activity"/>
    <property type="evidence" value="ECO:0007669"/>
    <property type="project" value="UniProtKB-EC"/>
</dbReference>
<dbReference type="GO" id="GO:0016706">
    <property type="term" value="F:2-oxoglutarate-dependent dioxygenase activity"/>
    <property type="evidence" value="ECO:0007669"/>
    <property type="project" value="UniProtKB-ARBA"/>
</dbReference>
<dbReference type="GO" id="GO:0031418">
    <property type="term" value="F:L-ascorbic acid binding"/>
    <property type="evidence" value="ECO:0007669"/>
    <property type="project" value="UniProtKB-KW"/>
</dbReference>
<dbReference type="GO" id="GO:0046872">
    <property type="term" value="F:metal ion binding"/>
    <property type="evidence" value="ECO:0007669"/>
    <property type="project" value="UniProtKB-KW"/>
</dbReference>
<dbReference type="GO" id="GO:0009805">
    <property type="term" value="P:coumarin biosynthetic process"/>
    <property type="evidence" value="ECO:0007669"/>
    <property type="project" value="UniProtKB-ARBA"/>
</dbReference>
<dbReference type="GO" id="GO:0009693">
    <property type="term" value="P:ethylene biosynthetic process"/>
    <property type="evidence" value="ECO:0007669"/>
    <property type="project" value="UniProtKB-UniPathway"/>
</dbReference>
<dbReference type="GO" id="GO:0002238">
    <property type="term" value="P:response to molecule of fungal origin"/>
    <property type="evidence" value="ECO:0007669"/>
    <property type="project" value="UniProtKB-ARBA"/>
</dbReference>
<dbReference type="FunFam" id="2.60.120.330:FF:000002">
    <property type="entry name" value="1-aminocyclopropane-1-carboxylate oxidase 1"/>
    <property type="match status" value="1"/>
</dbReference>
<dbReference type="Gene3D" id="2.60.120.330">
    <property type="entry name" value="B-lactam Antibiotic, Isopenicillin N Synthase, Chain"/>
    <property type="match status" value="1"/>
</dbReference>
<dbReference type="InterPro" id="IPR026992">
    <property type="entry name" value="DIOX_N"/>
</dbReference>
<dbReference type="InterPro" id="IPR044861">
    <property type="entry name" value="IPNS-like_FE2OG_OXY"/>
</dbReference>
<dbReference type="InterPro" id="IPR027443">
    <property type="entry name" value="IPNS-like_sf"/>
</dbReference>
<dbReference type="InterPro" id="IPR005123">
    <property type="entry name" value="Oxoglu/Fe-dep_dioxygenase_dom"/>
</dbReference>
<dbReference type="InterPro" id="IPR050295">
    <property type="entry name" value="Plant_2OG-oxidoreductases"/>
</dbReference>
<dbReference type="PANTHER" id="PTHR47991">
    <property type="entry name" value="OXOGLUTARATE/IRON-DEPENDENT DIOXYGENASE"/>
    <property type="match status" value="1"/>
</dbReference>
<dbReference type="Pfam" id="PF03171">
    <property type="entry name" value="2OG-FeII_Oxy"/>
    <property type="match status" value="1"/>
</dbReference>
<dbReference type="Pfam" id="PF14226">
    <property type="entry name" value="DIOX_N"/>
    <property type="match status" value="1"/>
</dbReference>
<dbReference type="SUPFAM" id="SSF51197">
    <property type="entry name" value="Clavaminate synthase-like"/>
    <property type="match status" value="1"/>
</dbReference>
<dbReference type="PROSITE" id="PS51471">
    <property type="entry name" value="FE2OG_OXY"/>
    <property type="match status" value="1"/>
</dbReference>
<gene>
    <name type="primary">ACO3</name>
</gene>